<keyword id="KW-0474">Menaquinone biosynthesis</keyword>
<keyword id="KW-0489">Methyltransferase</keyword>
<keyword id="KW-1185">Reference proteome</keyword>
<keyword id="KW-0949">S-adenosyl-L-methionine</keyword>
<keyword id="KW-0808">Transferase</keyword>
<keyword id="KW-0831">Ubiquinone biosynthesis</keyword>
<gene>
    <name evidence="1" type="primary">ubiE</name>
    <name type="ordered locus">Oant_1317</name>
</gene>
<sequence length="263" mass="29073">MSQQNGNADRVGAQGGMEHSFGFKAVDESEKQGLVNDVFHKVASKYDVMNDLMSAGMHRVWKDAMIAWLAPSKRPGWTSLDVAGGTGDIAFRIVEASGRQAHVTILDINGSMLGVGRERAIKKGLADNLEFVEASAEELPFEDASFDAYTISFGIRNVPHIDKALSEAYRVLKPGGRFLCLEFSEVELPVLDKVYDQWSFHAIPRIGKMITGDADSYSYLVESIRKFPKQQDFAAMIEKAGFERVSYRNFTGGIAALHSGWKL</sequence>
<comment type="function">
    <text evidence="1">Methyltransferase required for the conversion of demethylmenaquinol (DMKH2) to menaquinol (MKH2) and the conversion of 2-polyprenyl-6-methoxy-1,4-benzoquinol (DDMQH2) to 2-polyprenyl-3-methyl-6-methoxy-1,4-benzoquinol (DMQH2).</text>
</comment>
<comment type="catalytic activity">
    <reaction evidence="1">
        <text>a 2-demethylmenaquinol + S-adenosyl-L-methionine = a menaquinol + S-adenosyl-L-homocysteine + H(+)</text>
        <dbReference type="Rhea" id="RHEA:42640"/>
        <dbReference type="Rhea" id="RHEA-COMP:9539"/>
        <dbReference type="Rhea" id="RHEA-COMP:9563"/>
        <dbReference type="ChEBI" id="CHEBI:15378"/>
        <dbReference type="ChEBI" id="CHEBI:18151"/>
        <dbReference type="ChEBI" id="CHEBI:55437"/>
        <dbReference type="ChEBI" id="CHEBI:57856"/>
        <dbReference type="ChEBI" id="CHEBI:59789"/>
        <dbReference type="EC" id="2.1.1.163"/>
    </reaction>
</comment>
<comment type="catalytic activity">
    <reaction evidence="1">
        <text>a 2-methoxy-6-(all-trans-polyprenyl)benzene-1,4-diol + S-adenosyl-L-methionine = a 5-methoxy-2-methyl-3-(all-trans-polyprenyl)benzene-1,4-diol + S-adenosyl-L-homocysteine + H(+)</text>
        <dbReference type="Rhea" id="RHEA:28286"/>
        <dbReference type="Rhea" id="RHEA-COMP:10858"/>
        <dbReference type="Rhea" id="RHEA-COMP:10859"/>
        <dbReference type="ChEBI" id="CHEBI:15378"/>
        <dbReference type="ChEBI" id="CHEBI:57856"/>
        <dbReference type="ChEBI" id="CHEBI:59789"/>
        <dbReference type="ChEBI" id="CHEBI:84166"/>
        <dbReference type="ChEBI" id="CHEBI:84167"/>
        <dbReference type="EC" id="2.1.1.201"/>
    </reaction>
</comment>
<comment type="pathway">
    <text evidence="1">Quinol/quinone metabolism; menaquinone biosynthesis; menaquinol from 1,4-dihydroxy-2-naphthoate: step 2/2.</text>
</comment>
<comment type="pathway">
    <text evidence="1">Cofactor biosynthesis; ubiquinone biosynthesis.</text>
</comment>
<comment type="similarity">
    <text evidence="1">Belongs to the class I-like SAM-binding methyltransferase superfamily. MenG/UbiE family.</text>
</comment>
<protein>
    <recommendedName>
        <fullName evidence="1">Ubiquinone/menaquinone biosynthesis C-methyltransferase UbiE</fullName>
        <ecNumber evidence="1">2.1.1.163</ecNumber>
        <ecNumber evidence="1">2.1.1.201</ecNumber>
    </recommendedName>
    <alternativeName>
        <fullName evidence="1">2-methoxy-6-polyprenyl-1,4-benzoquinol methylase</fullName>
    </alternativeName>
    <alternativeName>
        <fullName evidence="1">Demethylmenaquinone methyltransferase</fullName>
    </alternativeName>
</protein>
<proteinExistence type="inferred from homology"/>
<accession>A6WYI0</accession>
<organism>
    <name type="scientific">Brucella anthropi (strain ATCC 49188 / DSM 6882 / CCUG 24695 / JCM 21032 / LMG 3331 / NBRC 15819 / NCTC 12168 / Alc 37)</name>
    <name type="common">Ochrobactrum anthropi</name>
    <dbReference type="NCBI Taxonomy" id="439375"/>
    <lineage>
        <taxon>Bacteria</taxon>
        <taxon>Pseudomonadati</taxon>
        <taxon>Pseudomonadota</taxon>
        <taxon>Alphaproteobacteria</taxon>
        <taxon>Hyphomicrobiales</taxon>
        <taxon>Brucellaceae</taxon>
        <taxon>Brucella/Ochrobactrum group</taxon>
        <taxon>Brucella</taxon>
    </lineage>
</organism>
<evidence type="ECO:0000255" key="1">
    <source>
        <dbReference type="HAMAP-Rule" id="MF_01813"/>
    </source>
</evidence>
<feature type="chain" id="PRO_1000088287" description="Ubiquinone/menaquinone biosynthesis C-methyltransferase UbiE">
    <location>
        <begin position="1"/>
        <end position="263"/>
    </location>
</feature>
<feature type="binding site" evidence="1">
    <location>
        <position position="86"/>
    </location>
    <ligand>
        <name>S-adenosyl-L-methionine</name>
        <dbReference type="ChEBI" id="CHEBI:59789"/>
    </ligand>
</feature>
<feature type="binding site" evidence="1">
    <location>
        <position position="107"/>
    </location>
    <ligand>
        <name>S-adenosyl-L-methionine</name>
        <dbReference type="ChEBI" id="CHEBI:59789"/>
    </ligand>
</feature>
<feature type="binding site" evidence="1">
    <location>
        <position position="152"/>
    </location>
    <ligand>
        <name>S-adenosyl-L-methionine</name>
        <dbReference type="ChEBI" id="CHEBI:59789"/>
    </ligand>
</feature>
<reference key="1">
    <citation type="journal article" date="2011" name="J. Bacteriol.">
        <title>Genome of Ochrobactrum anthropi ATCC 49188 T, a versatile opportunistic pathogen and symbiont of several eukaryotic hosts.</title>
        <authorList>
            <person name="Chain P.S."/>
            <person name="Lang D.M."/>
            <person name="Comerci D.J."/>
            <person name="Malfatti S.A."/>
            <person name="Vergez L.M."/>
            <person name="Shin M."/>
            <person name="Ugalde R.A."/>
            <person name="Garcia E."/>
            <person name="Tolmasky M.E."/>
        </authorList>
    </citation>
    <scope>NUCLEOTIDE SEQUENCE [LARGE SCALE GENOMIC DNA]</scope>
    <source>
        <strain>ATCC 49188 / DSM 6882 / CCUG 24695 / JCM 21032 / LMG 3331 / NBRC 15819 / NCTC 12168 / Alc 37</strain>
    </source>
</reference>
<name>UBIE_BRUA4</name>
<dbReference type="EC" id="2.1.1.163" evidence="1"/>
<dbReference type="EC" id="2.1.1.201" evidence="1"/>
<dbReference type="EMBL" id="CP000758">
    <property type="protein sequence ID" value="ABS14034.1"/>
    <property type="molecule type" value="Genomic_DNA"/>
</dbReference>
<dbReference type="RefSeq" id="WP_010659383.1">
    <property type="nucleotide sequence ID" value="NC_009667.1"/>
</dbReference>
<dbReference type="SMR" id="A6WYI0"/>
<dbReference type="STRING" id="439375.Oant_1317"/>
<dbReference type="GeneID" id="61318181"/>
<dbReference type="KEGG" id="oan:Oant_1317"/>
<dbReference type="eggNOG" id="COG2226">
    <property type="taxonomic scope" value="Bacteria"/>
</dbReference>
<dbReference type="HOGENOM" id="CLU_037990_0_0_5"/>
<dbReference type="PhylomeDB" id="A6WYI0"/>
<dbReference type="UniPathway" id="UPA00079">
    <property type="reaction ID" value="UER00169"/>
</dbReference>
<dbReference type="UniPathway" id="UPA00232"/>
<dbReference type="Proteomes" id="UP000002301">
    <property type="component" value="Chromosome 1"/>
</dbReference>
<dbReference type="GO" id="GO:0008425">
    <property type="term" value="F:2-methoxy-6-polyprenyl-1,4-benzoquinol methyltransferase activity"/>
    <property type="evidence" value="ECO:0007669"/>
    <property type="project" value="UniProtKB-UniRule"/>
</dbReference>
<dbReference type="GO" id="GO:0043770">
    <property type="term" value="F:demethylmenaquinone methyltransferase activity"/>
    <property type="evidence" value="ECO:0007669"/>
    <property type="project" value="UniProtKB-UniRule"/>
</dbReference>
<dbReference type="GO" id="GO:0009060">
    <property type="term" value="P:aerobic respiration"/>
    <property type="evidence" value="ECO:0007669"/>
    <property type="project" value="UniProtKB-UniRule"/>
</dbReference>
<dbReference type="GO" id="GO:0009234">
    <property type="term" value="P:menaquinone biosynthetic process"/>
    <property type="evidence" value="ECO:0007669"/>
    <property type="project" value="UniProtKB-UniRule"/>
</dbReference>
<dbReference type="GO" id="GO:0032259">
    <property type="term" value="P:methylation"/>
    <property type="evidence" value="ECO:0007669"/>
    <property type="project" value="UniProtKB-KW"/>
</dbReference>
<dbReference type="CDD" id="cd02440">
    <property type="entry name" value="AdoMet_MTases"/>
    <property type="match status" value="1"/>
</dbReference>
<dbReference type="FunFam" id="3.40.50.150:FF:000064">
    <property type="entry name" value="2-methoxy-6-polyprenyl-1,4-benzoquinol methylase, mitochondrial"/>
    <property type="match status" value="1"/>
</dbReference>
<dbReference type="Gene3D" id="3.40.50.150">
    <property type="entry name" value="Vaccinia Virus protein VP39"/>
    <property type="match status" value="1"/>
</dbReference>
<dbReference type="HAMAP" id="MF_01813">
    <property type="entry name" value="MenG_UbiE_methyltr"/>
    <property type="match status" value="1"/>
</dbReference>
<dbReference type="InterPro" id="IPR029063">
    <property type="entry name" value="SAM-dependent_MTases_sf"/>
</dbReference>
<dbReference type="InterPro" id="IPR004033">
    <property type="entry name" value="UbiE/COQ5_MeTrFase"/>
</dbReference>
<dbReference type="InterPro" id="IPR023576">
    <property type="entry name" value="UbiE/COQ5_MeTrFase_CS"/>
</dbReference>
<dbReference type="NCBIfam" id="TIGR01934">
    <property type="entry name" value="MenG_MenH_UbiE"/>
    <property type="match status" value="1"/>
</dbReference>
<dbReference type="NCBIfam" id="NF001242">
    <property type="entry name" value="PRK00216.1-3"/>
    <property type="match status" value="1"/>
</dbReference>
<dbReference type="NCBIfam" id="NF001244">
    <property type="entry name" value="PRK00216.1-5"/>
    <property type="match status" value="1"/>
</dbReference>
<dbReference type="PANTHER" id="PTHR43591:SF24">
    <property type="entry name" value="2-METHOXY-6-POLYPRENYL-1,4-BENZOQUINOL METHYLASE, MITOCHONDRIAL"/>
    <property type="match status" value="1"/>
</dbReference>
<dbReference type="PANTHER" id="PTHR43591">
    <property type="entry name" value="METHYLTRANSFERASE"/>
    <property type="match status" value="1"/>
</dbReference>
<dbReference type="Pfam" id="PF01209">
    <property type="entry name" value="Ubie_methyltran"/>
    <property type="match status" value="1"/>
</dbReference>
<dbReference type="SUPFAM" id="SSF53335">
    <property type="entry name" value="S-adenosyl-L-methionine-dependent methyltransferases"/>
    <property type="match status" value="1"/>
</dbReference>
<dbReference type="PROSITE" id="PS51608">
    <property type="entry name" value="SAM_MT_UBIE"/>
    <property type="match status" value="1"/>
</dbReference>
<dbReference type="PROSITE" id="PS01183">
    <property type="entry name" value="UBIE_1"/>
    <property type="match status" value="1"/>
</dbReference>
<dbReference type="PROSITE" id="PS01184">
    <property type="entry name" value="UBIE_2"/>
    <property type="match status" value="1"/>
</dbReference>